<name>UVRB_CHLPD</name>
<protein>
    <recommendedName>
        <fullName evidence="1">UvrABC system protein B</fullName>
        <shortName evidence="1">Protein UvrB</shortName>
    </recommendedName>
    <alternativeName>
        <fullName evidence="1">Excinuclease ABC subunit B</fullName>
    </alternativeName>
</protein>
<gene>
    <name evidence="1" type="primary">uvrB</name>
    <name type="ordered locus">Cpha266_2024</name>
</gene>
<reference key="1">
    <citation type="submission" date="2006-12" db="EMBL/GenBank/DDBJ databases">
        <title>Complete sequence of Chlorobium phaeobacteroides DSM 266.</title>
        <authorList>
            <consortium name="US DOE Joint Genome Institute"/>
            <person name="Copeland A."/>
            <person name="Lucas S."/>
            <person name="Lapidus A."/>
            <person name="Barry K."/>
            <person name="Detter J.C."/>
            <person name="Glavina del Rio T."/>
            <person name="Hammon N."/>
            <person name="Israni S."/>
            <person name="Pitluck S."/>
            <person name="Goltsman E."/>
            <person name="Schmutz J."/>
            <person name="Larimer F."/>
            <person name="Land M."/>
            <person name="Hauser L."/>
            <person name="Mikhailova N."/>
            <person name="Li T."/>
            <person name="Overmann J."/>
            <person name="Bryant D.A."/>
            <person name="Richardson P."/>
        </authorList>
    </citation>
    <scope>NUCLEOTIDE SEQUENCE [LARGE SCALE GENOMIC DNA]</scope>
    <source>
        <strain>DSM 266 / SMG 266 / 2430</strain>
    </source>
</reference>
<keyword id="KW-0067">ATP-binding</keyword>
<keyword id="KW-0963">Cytoplasm</keyword>
<keyword id="KW-0227">DNA damage</keyword>
<keyword id="KW-0228">DNA excision</keyword>
<keyword id="KW-0234">DNA repair</keyword>
<keyword id="KW-0267">Excision nuclease</keyword>
<keyword id="KW-0347">Helicase</keyword>
<keyword id="KW-0378">Hydrolase</keyword>
<keyword id="KW-0547">Nucleotide-binding</keyword>
<keyword id="KW-1185">Reference proteome</keyword>
<keyword id="KW-0742">SOS response</keyword>
<sequence>MHGITDGTYRLVSEYDPKGDQPKAIMALTDGVLRGDRWQTLLGVTGSGKTFTVSNVIAQVDKPVLVMSHNKTLAAQLYGELRQFFPDNAVEYFVSYYDFYQPEAYLPALDKYIAKDLRINDEIERLRLKTTSSLLSGRRDVIVVSSVSCIYGLGSPDDWKAQIVELRSGMEKDRDLFLQELVSLHYIRDDVDPGPGKFRVRGDIIDLVPAHEELALRVEFFGSEIESLQTFNIQSGELLGKDTYAFIYPARQFIAEAETLKQAMVAIENELAGRLNELRRDDRLVEARRLEERTRYDLEMMKELGYCSGIENYSRHLAGRSEGERPYCLLDYFPEDFLVIVDESHVTLPQIRGMYGGDRSRKAILVEHGFRLPSALDNRPLRFEEFTEIVPQVICVSATPGDLELERCGGVVVEQLVRPTGLLDPPVEVRPVKGQIDDLLAEIRRHTAKGHKALVMTLTKRMSEDLDDYFKKVGIRSRYLHSEIKSLERIQILRELRAGDVEVLVGVNLLREGLDLPEVSLVAILDADKEGFLRNTRSLMQIAGRAARNVDGFVVFYADVLTRSIMEVLDETARRRTVQQLYNETHGITPRSIRKSLDQVLNTTSVADAEERYRRKRFGLGAKSGVQSAALLHSFTPEESYAMVAELRLEMNEAAIQMEYEKAAYLRDEIARLMHGLEAQSDSKE</sequence>
<feature type="chain" id="PRO_1000077873" description="UvrABC system protein B">
    <location>
        <begin position="1"/>
        <end position="685"/>
    </location>
</feature>
<feature type="domain" description="Helicase ATP-binding" evidence="1">
    <location>
        <begin position="30"/>
        <end position="188"/>
    </location>
</feature>
<feature type="domain" description="Helicase C-terminal" evidence="1">
    <location>
        <begin position="435"/>
        <end position="597"/>
    </location>
</feature>
<feature type="domain" description="UVR" evidence="1">
    <location>
        <begin position="641"/>
        <end position="676"/>
    </location>
</feature>
<feature type="short sequence motif" description="Beta-hairpin">
    <location>
        <begin position="96"/>
        <end position="119"/>
    </location>
</feature>
<feature type="binding site" evidence="1">
    <location>
        <begin position="43"/>
        <end position="50"/>
    </location>
    <ligand>
        <name>ATP</name>
        <dbReference type="ChEBI" id="CHEBI:30616"/>
    </ligand>
</feature>
<proteinExistence type="inferred from homology"/>
<evidence type="ECO:0000255" key="1">
    <source>
        <dbReference type="HAMAP-Rule" id="MF_00204"/>
    </source>
</evidence>
<dbReference type="EMBL" id="CP000492">
    <property type="protein sequence ID" value="ABL66036.1"/>
    <property type="molecule type" value="Genomic_DNA"/>
</dbReference>
<dbReference type="RefSeq" id="WP_011745840.1">
    <property type="nucleotide sequence ID" value="NC_008639.1"/>
</dbReference>
<dbReference type="SMR" id="A1BI09"/>
<dbReference type="STRING" id="290317.Cpha266_2024"/>
<dbReference type="KEGG" id="cph:Cpha266_2024"/>
<dbReference type="eggNOG" id="COG0556">
    <property type="taxonomic scope" value="Bacteria"/>
</dbReference>
<dbReference type="HOGENOM" id="CLU_009621_2_1_10"/>
<dbReference type="OrthoDB" id="9806651at2"/>
<dbReference type="Proteomes" id="UP000008701">
    <property type="component" value="Chromosome"/>
</dbReference>
<dbReference type="GO" id="GO:0005737">
    <property type="term" value="C:cytoplasm"/>
    <property type="evidence" value="ECO:0007669"/>
    <property type="project" value="UniProtKB-SubCell"/>
</dbReference>
<dbReference type="GO" id="GO:0009380">
    <property type="term" value="C:excinuclease repair complex"/>
    <property type="evidence" value="ECO:0007669"/>
    <property type="project" value="InterPro"/>
</dbReference>
<dbReference type="GO" id="GO:0005524">
    <property type="term" value="F:ATP binding"/>
    <property type="evidence" value="ECO:0007669"/>
    <property type="project" value="UniProtKB-UniRule"/>
</dbReference>
<dbReference type="GO" id="GO:0016887">
    <property type="term" value="F:ATP hydrolysis activity"/>
    <property type="evidence" value="ECO:0007669"/>
    <property type="project" value="InterPro"/>
</dbReference>
<dbReference type="GO" id="GO:0003677">
    <property type="term" value="F:DNA binding"/>
    <property type="evidence" value="ECO:0007669"/>
    <property type="project" value="UniProtKB-UniRule"/>
</dbReference>
<dbReference type="GO" id="GO:0009381">
    <property type="term" value="F:excinuclease ABC activity"/>
    <property type="evidence" value="ECO:0007669"/>
    <property type="project" value="UniProtKB-UniRule"/>
</dbReference>
<dbReference type="GO" id="GO:0004386">
    <property type="term" value="F:helicase activity"/>
    <property type="evidence" value="ECO:0007669"/>
    <property type="project" value="UniProtKB-KW"/>
</dbReference>
<dbReference type="GO" id="GO:0006289">
    <property type="term" value="P:nucleotide-excision repair"/>
    <property type="evidence" value="ECO:0007669"/>
    <property type="project" value="UniProtKB-UniRule"/>
</dbReference>
<dbReference type="GO" id="GO:0009432">
    <property type="term" value="P:SOS response"/>
    <property type="evidence" value="ECO:0007669"/>
    <property type="project" value="UniProtKB-UniRule"/>
</dbReference>
<dbReference type="CDD" id="cd17916">
    <property type="entry name" value="DEXHc_UvrB"/>
    <property type="match status" value="1"/>
</dbReference>
<dbReference type="CDD" id="cd18790">
    <property type="entry name" value="SF2_C_UvrB"/>
    <property type="match status" value="1"/>
</dbReference>
<dbReference type="Gene3D" id="3.40.50.300">
    <property type="entry name" value="P-loop containing nucleotide triphosphate hydrolases"/>
    <property type="match status" value="3"/>
</dbReference>
<dbReference type="Gene3D" id="4.10.860.10">
    <property type="entry name" value="UVR domain"/>
    <property type="match status" value="1"/>
</dbReference>
<dbReference type="HAMAP" id="MF_00204">
    <property type="entry name" value="UvrB"/>
    <property type="match status" value="1"/>
</dbReference>
<dbReference type="InterPro" id="IPR006935">
    <property type="entry name" value="Helicase/UvrB_N"/>
</dbReference>
<dbReference type="InterPro" id="IPR014001">
    <property type="entry name" value="Helicase_ATP-bd"/>
</dbReference>
<dbReference type="InterPro" id="IPR001650">
    <property type="entry name" value="Helicase_C-like"/>
</dbReference>
<dbReference type="InterPro" id="IPR027417">
    <property type="entry name" value="P-loop_NTPase"/>
</dbReference>
<dbReference type="InterPro" id="IPR001943">
    <property type="entry name" value="UVR_dom"/>
</dbReference>
<dbReference type="InterPro" id="IPR036876">
    <property type="entry name" value="UVR_dom_sf"/>
</dbReference>
<dbReference type="InterPro" id="IPR004807">
    <property type="entry name" value="UvrB"/>
</dbReference>
<dbReference type="InterPro" id="IPR041471">
    <property type="entry name" value="UvrB_inter"/>
</dbReference>
<dbReference type="InterPro" id="IPR024759">
    <property type="entry name" value="UvrB_YAD/RRR_dom"/>
</dbReference>
<dbReference type="NCBIfam" id="NF003673">
    <property type="entry name" value="PRK05298.1"/>
    <property type="match status" value="1"/>
</dbReference>
<dbReference type="NCBIfam" id="TIGR00631">
    <property type="entry name" value="uvrb"/>
    <property type="match status" value="1"/>
</dbReference>
<dbReference type="PANTHER" id="PTHR24029">
    <property type="entry name" value="UVRABC SYSTEM PROTEIN B"/>
    <property type="match status" value="1"/>
</dbReference>
<dbReference type="PANTHER" id="PTHR24029:SF0">
    <property type="entry name" value="UVRABC SYSTEM PROTEIN B"/>
    <property type="match status" value="1"/>
</dbReference>
<dbReference type="Pfam" id="PF00271">
    <property type="entry name" value="Helicase_C"/>
    <property type="match status" value="1"/>
</dbReference>
<dbReference type="Pfam" id="PF04851">
    <property type="entry name" value="ResIII"/>
    <property type="match status" value="1"/>
</dbReference>
<dbReference type="Pfam" id="PF02151">
    <property type="entry name" value="UVR"/>
    <property type="match status" value="1"/>
</dbReference>
<dbReference type="Pfam" id="PF12344">
    <property type="entry name" value="UvrB"/>
    <property type="match status" value="1"/>
</dbReference>
<dbReference type="Pfam" id="PF17757">
    <property type="entry name" value="UvrB_inter"/>
    <property type="match status" value="1"/>
</dbReference>
<dbReference type="SMART" id="SM00487">
    <property type="entry name" value="DEXDc"/>
    <property type="match status" value="1"/>
</dbReference>
<dbReference type="SMART" id="SM00490">
    <property type="entry name" value="HELICc"/>
    <property type="match status" value="1"/>
</dbReference>
<dbReference type="SUPFAM" id="SSF46600">
    <property type="entry name" value="C-terminal UvrC-binding domain of UvrB"/>
    <property type="match status" value="1"/>
</dbReference>
<dbReference type="SUPFAM" id="SSF52540">
    <property type="entry name" value="P-loop containing nucleoside triphosphate hydrolases"/>
    <property type="match status" value="2"/>
</dbReference>
<dbReference type="PROSITE" id="PS51192">
    <property type="entry name" value="HELICASE_ATP_BIND_1"/>
    <property type="match status" value="1"/>
</dbReference>
<dbReference type="PROSITE" id="PS51194">
    <property type="entry name" value="HELICASE_CTER"/>
    <property type="match status" value="1"/>
</dbReference>
<dbReference type="PROSITE" id="PS50151">
    <property type="entry name" value="UVR"/>
    <property type="match status" value="1"/>
</dbReference>
<accession>A1BI09</accession>
<organism>
    <name type="scientific">Chlorobium phaeobacteroides (strain DSM 266 / SMG 266 / 2430)</name>
    <dbReference type="NCBI Taxonomy" id="290317"/>
    <lineage>
        <taxon>Bacteria</taxon>
        <taxon>Pseudomonadati</taxon>
        <taxon>Chlorobiota</taxon>
        <taxon>Chlorobiia</taxon>
        <taxon>Chlorobiales</taxon>
        <taxon>Chlorobiaceae</taxon>
        <taxon>Chlorobium/Pelodictyon group</taxon>
        <taxon>Chlorobium</taxon>
    </lineage>
</organism>
<comment type="function">
    <text evidence="1">The UvrABC repair system catalyzes the recognition and processing of DNA lesions. A damage recognition complex composed of 2 UvrA and 2 UvrB subunits scans DNA for abnormalities. Upon binding of the UvrA(2)B(2) complex to a putative damaged site, the DNA wraps around one UvrB monomer. DNA wrap is dependent on ATP binding by UvrB and probably causes local melting of the DNA helix, facilitating insertion of UvrB beta-hairpin between the DNA strands. Then UvrB probes one DNA strand for the presence of a lesion. If a lesion is found the UvrA subunits dissociate and the UvrB-DNA preincision complex is formed. This complex is subsequently bound by UvrC and the second UvrB is released. If no lesion is found, the DNA wraps around the other UvrB subunit that will check the other stand for damage.</text>
</comment>
<comment type="subunit">
    <text evidence="1">Forms a heterotetramer with UvrA during the search for lesions. Interacts with UvrC in an incision complex.</text>
</comment>
<comment type="subcellular location">
    <subcellularLocation>
        <location evidence="1">Cytoplasm</location>
    </subcellularLocation>
</comment>
<comment type="domain">
    <text evidence="1">The beta-hairpin motif is involved in DNA binding.</text>
</comment>
<comment type="similarity">
    <text evidence="1">Belongs to the UvrB family.</text>
</comment>